<name>KHSE_BRUSI</name>
<gene>
    <name evidence="1" type="primary">thrB</name>
    <name type="ordered locus">BSUIS_A0503</name>
</gene>
<evidence type="ECO:0000255" key="1">
    <source>
        <dbReference type="HAMAP-Rule" id="MF_00301"/>
    </source>
</evidence>
<feature type="chain" id="PRO_1000079017" description="Homoserine kinase">
    <location>
        <begin position="1"/>
        <end position="326"/>
    </location>
</feature>
<dbReference type="EC" id="2.7.1.39" evidence="1"/>
<dbReference type="EMBL" id="CP000911">
    <property type="protein sequence ID" value="ABY37591.1"/>
    <property type="molecule type" value="Genomic_DNA"/>
</dbReference>
<dbReference type="RefSeq" id="WP_004690619.1">
    <property type="nucleotide sequence ID" value="NC_010169.1"/>
</dbReference>
<dbReference type="SMR" id="B0CKG1"/>
<dbReference type="KEGG" id="bmt:BSUIS_A0503"/>
<dbReference type="HOGENOM" id="CLU_053300_1_0_5"/>
<dbReference type="UniPathway" id="UPA00050">
    <property type="reaction ID" value="UER00064"/>
</dbReference>
<dbReference type="Proteomes" id="UP000008545">
    <property type="component" value="Chromosome I"/>
</dbReference>
<dbReference type="GO" id="GO:0005524">
    <property type="term" value="F:ATP binding"/>
    <property type="evidence" value="ECO:0007669"/>
    <property type="project" value="UniProtKB-KW"/>
</dbReference>
<dbReference type="GO" id="GO:0004413">
    <property type="term" value="F:homoserine kinase activity"/>
    <property type="evidence" value="ECO:0007669"/>
    <property type="project" value="UniProtKB-UniRule"/>
</dbReference>
<dbReference type="GO" id="GO:0009088">
    <property type="term" value="P:threonine biosynthetic process"/>
    <property type="evidence" value="ECO:0007669"/>
    <property type="project" value="UniProtKB-UniRule"/>
</dbReference>
<dbReference type="CDD" id="cd05153">
    <property type="entry name" value="HomoserineK_II"/>
    <property type="match status" value="1"/>
</dbReference>
<dbReference type="Gene3D" id="3.90.1200.10">
    <property type="match status" value="1"/>
</dbReference>
<dbReference type="Gene3D" id="3.30.200.20">
    <property type="entry name" value="Phosphorylase Kinase, domain 1"/>
    <property type="match status" value="1"/>
</dbReference>
<dbReference type="HAMAP" id="MF_00301">
    <property type="entry name" value="Homoser_kinase_2"/>
    <property type="match status" value="1"/>
</dbReference>
<dbReference type="InterPro" id="IPR002575">
    <property type="entry name" value="Aminoglycoside_PTrfase"/>
</dbReference>
<dbReference type="InterPro" id="IPR005280">
    <property type="entry name" value="Homoserine_kinase_II"/>
</dbReference>
<dbReference type="InterPro" id="IPR011009">
    <property type="entry name" value="Kinase-like_dom_sf"/>
</dbReference>
<dbReference type="InterPro" id="IPR050249">
    <property type="entry name" value="Pseudomonas-type_ThrB"/>
</dbReference>
<dbReference type="NCBIfam" id="NF003558">
    <property type="entry name" value="PRK05231.1"/>
    <property type="match status" value="1"/>
</dbReference>
<dbReference type="NCBIfam" id="TIGR00938">
    <property type="entry name" value="thrB_alt"/>
    <property type="match status" value="1"/>
</dbReference>
<dbReference type="PANTHER" id="PTHR21064:SF6">
    <property type="entry name" value="AMINOGLYCOSIDE PHOSPHOTRANSFERASE DOMAIN-CONTAINING PROTEIN"/>
    <property type="match status" value="1"/>
</dbReference>
<dbReference type="PANTHER" id="PTHR21064">
    <property type="entry name" value="AMINOGLYCOSIDE PHOSPHOTRANSFERASE DOMAIN-CONTAINING PROTEIN-RELATED"/>
    <property type="match status" value="1"/>
</dbReference>
<dbReference type="Pfam" id="PF01636">
    <property type="entry name" value="APH"/>
    <property type="match status" value="1"/>
</dbReference>
<dbReference type="SUPFAM" id="SSF56112">
    <property type="entry name" value="Protein kinase-like (PK-like)"/>
    <property type="match status" value="1"/>
</dbReference>
<organism>
    <name type="scientific">Brucella suis (strain ATCC 23445 / NCTC 10510)</name>
    <dbReference type="NCBI Taxonomy" id="470137"/>
    <lineage>
        <taxon>Bacteria</taxon>
        <taxon>Pseudomonadati</taxon>
        <taxon>Pseudomonadota</taxon>
        <taxon>Alphaproteobacteria</taxon>
        <taxon>Hyphomicrobiales</taxon>
        <taxon>Brucellaceae</taxon>
        <taxon>Brucella/Ochrobactrum group</taxon>
        <taxon>Brucella</taxon>
    </lineage>
</organism>
<protein>
    <recommendedName>
        <fullName evidence="1">Homoserine kinase</fullName>
        <shortName evidence="1">HK</shortName>
        <shortName evidence="1">HSK</shortName>
        <ecNumber evidence="1">2.7.1.39</ecNumber>
    </recommendedName>
</protein>
<accession>B0CKG1</accession>
<reference key="1">
    <citation type="submission" date="2007-12" db="EMBL/GenBank/DDBJ databases">
        <title>Brucella suis ATCC 23445 whole genome shotgun sequencing project.</title>
        <authorList>
            <person name="Setubal J.C."/>
            <person name="Bowns C."/>
            <person name="Boyle S."/>
            <person name="Crasta O.R."/>
            <person name="Czar M.J."/>
            <person name="Dharmanolla C."/>
            <person name="Gillespie J.J."/>
            <person name="Kenyon R.W."/>
            <person name="Lu J."/>
            <person name="Mane S."/>
            <person name="Mohapatra S."/>
            <person name="Nagrani S."/>
            <person name="Purkayastha A."/>
            <person name="Rajasimha H.K."/>
            <person name="Shallom J.M."/>
            <person name="Shallom S."/>
            <person name="Shukla M."/>
            <person name="Snyder E.E."/>
            <person name="Sobral B.W."/>
            <person name="Wattam A.R."/>
            <person name="Will R."/>
            <person name="Williams K."/>
            <person name="Yoo H."/>
            <person name="Bruce D."/>
            <person name="Detter C."/>
            <person name="Munk C."/>
            <person name="Brettin T.S."/>
        </authorList>
    </citation>
    <scope>NUCLEOTIDE SEQUENCE [LARGE SCALE GENOMIC DNA]</scope>
    <source>
        <strain>ATCC 23445 / NCTC 10510</strain>
    </source>
</reference>
<sequence>MAVYTDINEIELGAFLRHYDIGTLTSYKGIAEGVENSNYLLHTSSGSFILTLYEKRTNREDLPFFLGLMQHLAKRGLECPQPVVRNDGAMIGQLAGRPAAIVTFLEGMWMRRPTVAHCEAVGEGLAHMHLAGADFPMRRRNGLTLPDWRPLWNLSRKCADTVERGLVAETEADLDFLEKNWPADLPQGVIHADLFPDNAFFLGDRLSGFIDFYFACTDILAYDVAVCLNAWCFEKDFSYNRTKGAALLRGYTSVRPLSEAEADALPVLARGAAVRFMLTRLYDWLTVPAGSFVVKKDPMEYVRRMRFHRQIESAAEYGLEMQGVAA</sequence>
<comment type="catalytic activity">
    <reaction evidence="1">
        <text>L-homoserine + ATP = O-phospho-L-homoserine + ADP + H(+)</text>
        <dbReference type="Rhea" id="RHEA:13985"/>
        <dbReference type="ChEBI" id="CHEBI:15378"/>
        <dbReference type="ChEBI" id="CHEBI:30616"/>
        <dbReference type="ChEBI" id="CHEBI:57476"/>
        <dbReference type="ChEBI" id="CHEBI:57590"/>
        <dbReference type="ChEBI" id="CHEBI:456216"/>
        <dbReference type="EC" id="2.7.1.39"/>
    </reaction>
</comment>
<comment type="pathway">
    <text evidence="1">Amino-acid biosynthesis; L-threonine biosynthesis; L-threonine from L-aspartate: step 4/5.</text>
</comment>
<comment type="similarity">
    <text evidence="1">Belongs to the pseudomonas-type ThrB family.</text>
</comment>
<keyword id="KW-0028">Amino-acid biosynthesis</keyword>
<keyword id="KW-0067">ATP-binding</keyword>
<keyword id="KW-0418">Kinase</keyword>
<keyword id="KW-0547">Nucleotide-binding</keyword>
<keyword id="KW-0791">Threonine biosynthesis</keyword>
<keyword id="KW-0808">Transferase</keyword>
<proteinExistence type="inferred from homology"/>